<comment type="subcellular location">
    <subcellularLocation>
        <location evidence="1">Cell outer membrane</location>
        <topology evidence="1">Multi-pass membrane protein</topology>
    </subcellularLocation>
</comment>
<comment type="similarity">
    <text evidence="2">Belongs to the outer membrane OOP (TC 1.B.6) superfamily. OmpX family.</text>
</comment>
<comment type="sequence caution" evidence="2">
    <conflict type="erroneous initiation">
        <sequence resource="EMBL-CDS" id="AAN79373"/>
    </conflict>
    <text>Extended N-terminus.</text>
</comment>
<gene>
    <name type="primary">ompX</name>
    <name type="ordered locus">c0900</name>
</gene>
<name>OMPX_ECOL6</name>
<accession>P0A918</accession>
<accession>P36546</accession>
<feature type="signal peptide" evidence="1">
    <location>
        <begin position="1"/>
        <end position="23"/>
    </location>
</feature>
<feature type="chain" id="PRO_0000020200" description="Outer membrane protein X">
    <location>
        <begin position="24"/>
        <end position="171"/>
    </location>
</feature>
<feature type="topological domain" description="Periplasmic" evidence="1">
    <location>
        <begin position="24"/>
        <end position="25"/>
    </location>
</feature>
<feature type="transmembrane region" description="Helical" evidence="1">
    <location>
        <begin position="26"/>
        <end position="35"/>
    </location>
</feature>
<feature type="topological domain" description="Extracellular" evidence="1">
    <location>
        <begin position="36"/>
        <end position="44"/>
    </location>
</feature>
<feature type="transmembrane region" description="Beta stranded" evidence="1">
    <location>
        <begin position="45"/>
        <end position="54"/>
    </location>
</feature>
<feature type="topological domain" description="Periplasmic" evidence="1">
    <location>
        <begin position="55"/>
        <end position="59"/>
    </location>
</feature>
<feature type="transmembrane region" description="Beta stranded" evidence="1">
    <location>
        <begin position="60"/>
        <end position="69"/>
    </location>
</feature>
<feature type="topological domain" description="Extracellular" evidence="1">
    <location>
        <begin position="70"/>
        <end position="85"/>
    </location>
</feature>
<feature type="transmembrane region" description="Beta stranded" evidence="1">
    <location>
        <begin position="86"/>
        <end position="95"/>
    </location>
</feature>
<feature type="topological domain" description="Periplasmic" evidence="1">
    <location>
        <begin position="96"/>
        <end position="99"/>
    </location>
</feature>
<feature type="transmembrane region" description="Beta stranded" evidence="1">
    <location>
        <begin position="100"/>
        <end position="109"/>
    </location>
</feature>
<feature type="topological domain" description="Extracellular" evidence="1">
    <location>
        <begin position="110"/>
        <end position="129"/>
    </location>
</feature>
<feature type="transmembrane region" description="Beta stranded" evidence="1">
    <location>
        <begin position="130"/>
        <end position="139"/>
    </location>
</feature>
<feature type="topological domain" description="Periplasmic" evidence="1">
    <location>
        <begin position="140"/>
        <end position="143"/>
    </location>
</feature>
<feature type="transmembrane region" description="Beta stranded" evidence="1">
    <location>
        <begin position="144"/>
        <end position="153"/>
    </location>
</feature>
<feature type="topological domain" description="Extracellular" evidence="1">
    <location>
        <begin position="154"/>
        <end position="160"/>
    </location>
</feature>
<feature type="transmembrane region" description="Beta stranded" evidence="1">
    <location>
        <begin position="161"/>
        <end position="170"/>
    </location>
</feature>
<feature type="topological domain" description="Periplasmic" evidence="1">
    <location>
        <position position="171"/>
    </location>
</feature>
<protein>
    <recommendedName>
        <fullName>Outer membrane protein X</fullName>
    </recommendedName>
</protein>
<organism>
    <name type="scientific">Escherichia coli O6:H1 (strain CFT073 / ATCC 700928 / UPEC)</name>
    <dbReference type="NCBI Taxonomy" id="199310"/>
    <lineage>
        <taxon>Bacteria</taxon>
        <taxon>Pseudomonadati</taxon>
        <taxon>Pseudomonadota</taxon>
        <taxon>Gammaproteobacteria</taxon>
        <taxon>Enterobacterales</taxon>
        <taxon>Enterobacteriaceae</taxon>
        <taxon>Escherichia</taxon>
    </lineage>
</organism>
<sequence>MKKIACLSALAAVLAFTAGTSVAATSTVTGGYAQSDAQGQMNKMGGFNLKYRYEEDNSPLGVIGSFTYTEKSRTASSGDYNKNQYYGITAGPAYRINDWASIYGVVGVGYGKFQTTEYPTYKHDTSDYGFSYGAGLQFNPMENVALDFSYEQSRIRSVDVGTWIAGVGYRF</sequence>
<reference key="1">
    <citation type="journal article" date="2002" name="Proc. Natl. Acad. Sci. U.S.A.">
        <title>Extensive mosaic structure revealed by the complete genome sequence of uropathogenic Escherichia coli.</title>
        <authorList>
            <person name="Welch R.A."/>
            <person name="Burland V."/>
            <person name="Plunkett G. III"/>
            <person name="Redford P."/>
            <person name="Roesch P."/>
            <person name="Rasko D."/>
            <person name="Buckles E.L."/>
            <person name="Liou S.-R."/>
            <person name="Boutin A."/>
            <person name="Hackett J."/>
            <person name="Stroud D."/>
            <person name="Mayhew G.F."/>
            <person name="Rose D.J."/>
            <person name="Zhou S."/>
            <person name="Schwartz D.C."/>
            <person name="Perna N.T."/>
            <person name="Mobley H.L.T."/>
            <person name="Donnenberg M.S."/>
            <person name="Blattner F.R."/>
        </authorList>
    </citation>
    <scope>NUCLEOTIDE SEQUENCE [LARGE SCALE GENOMIC DNA]</scope>
    <source>
        <strain>CFT073 / ATCC 700928 / UPEC</strain>
    </source>
</reference>
<evidence type="ECO:0000250" key="1"/>
<evidence type="ECO:0000305" key="2"/>
<proteinExistence type="inferred from homology"/>
<keyword id="KW-0998">Cell outer membrane</keyword>
<keyword id="KW-0472">Membrane</keyword>
<keyword id="KW-1185">Reference proteome</keyword>
<keyword id="KW-0732">Signal</keyword>
<keyword id="KW-0812">Transmembrane</keyword>
<keyword id="KW-1134">Transmembrane beta strand</keyword>
<keyword id="KW-1133">Transmembrane helix</keyword>
<dbReference type="EMBL" id="AE014075">
    <property type="protein sequence ID" value="AAN79373.1"/>
    <property type="status" value="ALT_INIT"/>
    <property type="molecule type" value="Genomic_DNA"/>
</dbReference>
<dbReference type="RefSeq" id="WP_001295296.1">
    <property type="nucleotide sequence ID" value="NZ_CP051263.1"/>
</dbReference>
<dbReference type="BMRB" id="P0A918"/>
<dbReference type="SMR" id="P0A918"/>
<dbReference type="STRING" id="199310.c0900"/>
<dbReference type="GeneID" id="93776613"/>
<dbReference type="KEGG" id="ecc:c0900"/>
<dbReference type="eggNOG" id="COG3637">
    <property type="taxonomic scope" value="Bacteria"/>
</dbReference>
<dbReference type="HOGENOM" id="CLU_099385_1_0_6"/>
<dbReference type="Proteomes" id="UP000001410">
    <property type="component" value="Chromosome"/>
</dbReference>
<dbReference type="GO" id="GO:0009279">
    <property type="term" value="C:cell outer membrane"/>
    <property type="evidence" value="ECO:0007669"/>
    <property type="project" value="UniProtKB-SubCell"/>
</dbReference>
<dbReference type="GO" id="GO:0044384">
    <property type="term" value="C:host outer membrane"/>
    <property type="evidence" value="ECO:0007669"/>
    <property type="project" value="InterPro"/>
</dbReference>
<dbReference type="Gene3D" id="2.40.160.20">
    <property type="match status" value="1"/>
</dbReference>
<dbReference type="InterPro" id="IPR051723">
    <property type="entry name" value="Bact_OM_Invasion-Related"/>
</dbReference>
<dbReference type="InterPro" id="IPR000758">
    <property type="entry name" value="Enterovir_OMP"/>
</dbReference>
<dbReference type="InterPro" id="IPR011250">
    <property type="entry name" value="OMP/PagP_b-brl"/>
</dbReference>
<dbReference type="InterPro" id="IPR027385">
    <property type="entry name" value="OMP_b-brl"/>
</dbReference>
<dbReference type="NCBIfam" id="NF006917">
    <property type="entry name" value="PRK09408.1"/>
    <property type="match status" value="1"/>
</dbReference>
<dbReference type="PANTHER" id="PTHR35892">
    <property type="entry name" value="OUTER MEMBRANE PROTEIN PAGN-RELATED"/>
    <property type="match status" value="1"/>
</dbReference>
<dbReference type="PANTHER" id="PTHR35892:SF3">
    <property type="entry name" value="OUTER MEMBRANE PROTEIN X"/>
    <property type="match status" value="1"/>
</dbReference>
<dbReference type="Pfam" id="PF13505">
    <property type="entry name" value="OMP_b-brl"/>
    <property type="match status" value="1"/>
</dbReference>
<dbReference type="PRINTS" id="PR00316">
    <property type="entry name" value="ENTEROVIROMP"/>
</dbReference>
<dbReference type="SUPFAM" id="SSF56925">
    <property type="entry name" value="OMPA-like"/>
    <property type="match status" value="1"/>
</dbReference>
<dbReference type="PROSITE" id="PS00694">
    <property type="entry name" value="ENT_VIR_OMP_1"/>
    <property type="match status" value="1"/>
</dbReference>
<dbReference type="PROSITE" id="PS00695">
    <property type="entry name" value="ENT_VIR_OMP_2"/>
    <property type="match status" value="1"/>
</dbReference>